<comment type="function">
    <text evidence="3">In cyliated cells, dynein axonemal particle-specific protein required for deployment of ODA to the axoneme. Interacts with outer dynein arm (ODA) subunits.</text>
</comment>
<comment type="subunit">
    <text evidence="3">Interacts with DNAI2.</text>
</comment>
<comment type="subcellular location">
    <subcellularLocation>
        <location evidence="3">Dynein axonemal particle</location>
    </subcellularLocation>
    <subcellularLocation>
        <location evidence="1">Cytoplasm</location>
    </subcellularLocation>
    <text evidence="3">Location is restricted to the outer dynein arm (ODA) sub-region of dynein axonemal particles (DynAPs).</text>
</comment>
<comment type="tissue specificity">
    <text evidence="3">Expression is enriched in multiciliated cells in the epidermis and the nephrostomes of the pronephros.</text>
</comment>
<comment type="disruption phenotype">
    <text evidence="3">Mutant multiciliated cells show a severe loss of ODAs from motile cilia.</text>
</comment>
<organism evidence="6">
    <name type="scientific">Xenopus laevis</name>
    <name type="common">African clawed frog</name>
    <dbReference type="NCBI Taxonomy" id="8355"/>
    <lineage>
        <taxon>Eukaryota</taxon>
        <taxon>Metazoa</taxon>
        <taxon>Chordata</taxon>
        <taxon>Craniata</taxon>
        <taxon>Vertebrata</taxon>
        <taxon>Euteleostomi</taxon>
        <taxon>Amphibia</taxon>
        <taxon>Batrachia</taxon>
        <taxon>Anura</taxon>
        <taxon>Pipoidea</taxon>
        <taxon>Pipidae</taxon>
        <taxon>Xenopodinae</taxon>
        <taxon>Xenopus</taxon>
        <taxon>Xenopus</taxon>
    </lineage>
</organism>
<accession>A0A1L8EYB2</accession>
<feature type="chain" id="PRO_0000452438" description="Dynein axonemal assembly factor 8">
    <location>
        <begin position="1"/>
        <end position="1572"/>
    </location>
</feature>
<feature type="region of interest" description="Disordered" evidence="2">
    <location>
        <begin position="1"/>
        <end position="21"/>
    </location>
</feature>
<feature type="region of interest" description="Disordered" evidence="2">
    <location>
        <begin position="262"/>
        <end position="304"/>
    </location>
</feature>
<feature type="region of interest" description="Disordered" evidence="2">
    <location>
        <begin position="324"/>
        <end position="428"/>
    </location>
</feature>
<feature type="region of interest" description="Disordered" evidence="2">
    <location>
        <begin position="849"/>
        <end position="871"/>
    </location>
</feature>
<feature type="region of interest" description="NDK">
    <location>
        <begin position="1249"/>
        <end position="1382"/>
    </location>
</feature>
<feature type="compositionally biased region" description="Polar residues" evidence="2">
    <location>
        <begin position="324"/>
        <end position="335"/>
    </location>
</feature>
<feature type="compositionally biased region" description="Basic and acidic residues" evidence="2">
    <location>
        <begin position="336"/>
        <end position="351"/>
    </location>
</feature>
<feature type="compositionally biased region" description="Polar residues" evidence="2">
    <location>
        <begin position="361"/>
        <end position="374"/>
    </location>
</feature>
<feature type="compositionally biased region" description="Basic and acidic residues" evidence="2">
    <location>
        <begin position="409"/>
        <end position="426"/>
    </location>
</feature>
<feature type="compositionally biased region" description="Polar residues" evidence="2">
    <location>
        <begin position="849"/>
        <end position="865"/>
    </location>
</feature>
<name>DAAF8_XENLA</name>
<gene>
    <name type="primary">dnaaf8</name>
    <name type="synonym">c16orf71</name>
    <name evidence="4" type="synonym">daap1</name>
    <name evidence="6" type="ORF">XELAEV_18045439mg</name>
</gene>
<evidence type="ECO:0000250" key="1">
    <source>
        <dbReference type="UniProtKB" id="Q8IYS4"/>
    </source>
</evidence>
<evidence type="ECO:0000256" key="2">
    <source>
        <dbReference type="SAM" id="MobiDB-lite"/>
    </source>
</evidence>
<evidence type="ECO:0000269" key="3">
    <source>
    </source>
</evidence>
<evidence type="ECO:0000303" key="4">
    <source>
    </source>
</evidence>
<evidence type="ECO:0000305" key="5"/>
<evidence type="ECO:0000312" key="6">
    <source>
        <dbReference type="EMBL" id="OCT64336.1"/>
    </source>
</evidence>
<evidence type="ECO:0000312" key="7">
    <source>
        <dbReference type="Proteomes" id="UP000186698"/>
    </source>
</evidence>
<reference evidence="7" key="1">
    <citation type="journal article" date="2016" name="Nature">
        <title>Genome evolution in the allotetraploid frog Xenopus laevis.</title>
        <authorList>
            <person name="Session A.M."/>
            <person name="Uno Y."/>
            <person name="Kwon T."/>
            <person name="Chapman J.A."/>
            <person name="Toyoda A."/>
            <person name="Takahashi S."/>
            <person name="Fukui A."/>
            <person name="Hikosaka A."/>
            <person name="Suzuki A."/>
            <person name="Kondo M."/>
            <person name="van Heeringen S.J."/>
            <person name="Quigley I."/>
            <person name="Heinz S."/>
            <person name="Ogino H."/>
            <person name="Ochi H."/>
            <person name="Hellsten U."/>
            <person name="Lyons J.B."/>
            <person name="Simakov O."/>
            <person name="Putnam N."/>
            <person name="Stites J."/>
            <person name="Kuroki Y."/>
            <person name="Tanaka T."/>
            <person name="Michiue T."/>
            <person name="Watanabe M."/>
            <person name="Bogdanovic O."/>
            <person name="Lister R."/>
            <person name="Georgiou G."/>
            <person name="Paranjpe S.S."/>
            <person name="van Kruijsbergen I."/>
            <person name="Shu S."/>
            <person name="Carlson J."/>
            <person name="Kinoshita T."/>
            <person name="Ohta Y."/>
            <person name="Mawaribuchi S."/>
            <person name="Jenkins J."/>
            <person name="Grimwood J."/>
            <person name="Schmutz J."/>
            <person name="Mitros T."/>
            <person name="Mozaffari S.V."/>
            <person name="Suzuki Y."/>
            <person name="Haramoto Y."/>
            <person name="Yamamoto T.S."/>
            <person name="Takagi C."/>
            <person name="Heald R."/>
            <person name="Miller K."/>
            <person name="Haudenschild C."/>
            <person name="Kitzman J."/>
            <person name="Nakayama T."/>
            <person name="Izutsu Y."/>
            <person name="Robert J."/>
            <person name="Fortriede J."/>
            <person name="Burns K."/>
            <person name="Lotay V."/>
            <person name="Karimi K."/>
            <person name="Yasuoka Y."/>
            <person name="Dichmann D.S."/>
            <person name="Flajnik M.F."/>
            <person name="Houston D.W."/>
            <person name="Shendure J."/>
            <person name="DuPasquier L."/>
            <person name="Vize P.D."/>
            <person name="Zorn A.M."/>
            <person name="Ito M."/>
            <person name="Marcotte E.M."/>
            <person name="Wallingford J.B."/>
            <person name="Ito Y."/>
            <person name="Asashima M."/>
            <person name="Ueno N."/>
            <person name="Matsuda Y."/>
            <person name="Veenstra G.J."/>
            <person name="Fujiyama A."/>
            <person name="Harland R.M."/>
            <person name="Taira M."/>
            <person name="Rokhsar D.S."/>
        </authorList>
    </citation>
    <scope>NUCLEOTIDE SEQUENCE [LARGE SCALE GENOMIC DNA]</scope>
    <source>
        <strain evidence="7">J</strain>
    </source>
</reference>
<reference key="2">
    <citation type="journal article" date="2020" name="Elife">
        <title>Functional partitioning of a liquid-like organelle during assembly of axonemal dyneins.</title>
        <authorList>
            <person name="Lee C."/>
            <person name="Cox R.M."/>
            <person name="Papoulas O."/>
            <person name="Horani A."/>
            <person name="Drew K."/>
            <person name="Devitt C.C."/>
            <person name="Brody S.L."/>
            <person name="Marcotte E.M."/>
            <person name="Wallingford J.B."/>
        </authorList>
    </citation>
    <scope>FUNCTION</scope>
    <scope>SUBCELLULAR LOCATION</scope>
    <scope>DISRUPTION PHENOTYPE</scope>
    <scope>TISSUE SPECIFICITY</scope>
    <scope>INTERACTION WITH DNAI2</scope>
</reference>
<dbReference type="EMBL" id="CM004482">
    <property type="protein sequence ID" value="OCT64336.1"/>
    <property type="molecule type" value="Genomic_DNA"/>
</dbReference>
<dbReference type="SMR" id="A0A1L8EYB2"/>
<dbReference type="STRING" id="8355.A0A1L8EYB2"/>
<dbReference type="PaxDb" id="8355-A0A1L8EYB2"/>
<dbReference type="GeneID" id="108701634"/>
<dbReference type="KEGG" id="xla:108701634"/>
<dbReference type="AGR" id="Xenbase:XB-GENE-22063499"/>
<dbReference type="CTD" id="108701634"/>
<dbReference type="Xenbase" id="XB-GENE-22063499">
    <property type="gene designation" value="dnaaf8.L"/>
</dbReference>
<dbReference type="OMA" id="PDVIWWR"/>
<dbReference type="OrthoDB" id="2162449at2759"/>
<dbReference type="Proteomes" id="UP000186698">
    <property type="component" value="Chromosome 9_10L"/>
</dbReference>
<dbReference type="Proteomes" id="UP000694892">
    <property type="component" value="Chromosome 9_10L"/>
</dbReference>
<dbReference type="Bgee" id="108701634">
    <property type="expression patterns" value="Expressed in testis and 11 other cell types or tissues"/>
</dbReference>
<dbReference type="GO" id="GO:0005879">
    <property type="term" value="C:axonemal microtubule"/>
    <property type="evidence" value="ECO:0000318"/>
    <property type="project" value="GO_Central"/>
</dbReference>
<dbReference type="GO" id="GO:0120293">
    <property type="term" value="C:dynein axonemal particle"/>
    <property type="evidence" value="ECO:0000314"/>
    <property type="project" value="UniProtKB"/>
</dbReference>
<dbReference type="GO" id="GO:0070840">
    <property type="term" value="F:dynein complex binding"/>
    <property type="evidence" value="ECO:0000314"/>
    <property type="project" value="UniProtKB"/>
</dbReference>
<dbReference type="GO" id="GO:0036158">
    <property type="term" value="P:outer dynein arm assembly"/>
    <property type="evidence" value="ECO:0000315"/>
    <property type="project" value="UniProtKB"/>
</dbReference>
<dbReference type="Gene3D" id="3.30.70.141">
    <property type="entry name" value="Nucleoside diphosphate kinase-like domain"/>
    <property type="match status" value="3"/>
</dbReference>
<dbReference type="InterPro" id="IPR031531">
    <property type="entry name" value="DNAAF8"/>
</dbReference>
<dbReference type="InterPro" id="IPR034907">
    <property type="entry name" value="NDK-like_dom"/>
</dbReference>
<dbReference type="InterPro" id="IPR036850">
    <property type="entry name" value="NDK-like_dom_sf"/>
</dbReference>
<dbReference type="PANTHER" id="PTHR43109:SF3">
    <property type="entry name" value="DYNEIN AXONEMAL ASSEMBLY FACTOR 8"/>
    <property type="match status" value="1"/>
</dbReference>
<dbReference type="PANTHER" id="PTHR43109">
    <property type="entry name" value="NUCLEOSIDE DIPHOSPHATE KINASE 7"/>
    <property type="match status" value="1"/>
</dbReference>
<dbReference type="Pfam" id="PF15773">
    <property type="entry name" value="DAAP1"/>
    <property type="match status" value="1"/>
</dbReference>
<dbReference type="Pfam" id="PF00334">
    <property type="entry name" value="NDK"/>
    <property type="match status" value="1"/>
</dbReference>
<dbReference type="SMART" id="SM00562">
    <property type="entry name" value="NDK"/>
    <property type="match status" value="1"/>
</dbReference>
<dbReference type="SUPFAM" id="SSF54919">
    <property type="entry name" value="Nucleoside diphosphate kinase, NDK"/>
    <property type="match status" value="4"/>
</dbReference>
<dbReference type="PROSITE" id="PS51374">
    <property type="entry name" value="NDPK_LIKE"/>
    <property type="match status" value="3"/>
</dbReference>
<keyword id="KW-0963">Cytoplasm</keyword>
<keyword id="KW-1185">Reference proteome</keyword>
<sequence>MASEQDGFLPAATRGDSNWSGVSGWESALSAMRAEVPSIDSDDSSLSDCEEEELHIFQREDTNLIPDLSIELLDDGELNSEVVTRQMSLEKVEFSDSLEPSPNVCVPLSVQKAELDDTINSRNPETEQLCPEPIDNIQTESMVGIKDSEKEDGFRHVLHSSVTTVLKPQINSNVDSEYEIHPGNTEKEHLSTSALSSKPVGLSLQFLECLEQWDLNALLHQLKEEEVQEREMPPLILSMEESTERRHKLIMEKLVEFAAQQSEEVSSVPQLEEKEKEGTISKSSFRPYPDQKMYLKGSGKHPQSFSTICLDLRTTVSKMGQVTSLEQNPENPSQRNEQKEKHHLNKTDHTGKSLLLRNRHNIQNDSLSDANMSNSESLSKEKKELGTPTQRKQRPKSKVDISPKLQEMVGREEKDGREEQEKEKEILQYLPPKSLINSRADEFAQREKQEKEKKARLRMLTQLEDLKPRSSVNGRQPMAEATPILFHPETSYCPGISSLPDVARSGVETLLLTICLSSCGQVFIPGQHGARSSYPSLFLANTFHCLLTWLISLVPGVNTHGKVNAPFHVLGLQQAWQEEGLALYACLSPRQIATQSSPKIRKHKGKQDLRGTSSFYQRVSLFLSHNTLQSVIWWSEDVVERLQGKLFPLPTEVPAVRLSSIATLNSAPEAVEKVFSSACGFYWQTLETEEKINPLLSEIPTDSETEVVSVIVFERMLSNPTAFHHTLHIIQTEGLDVCGVRLLYPQANALHSYIDTVPSSYTGGDGQTLPVLALALRGTQAEHIWAEIAGPFDPQLARLTDQYSLNAMYGFKRGEPIMHWARKSGRLLQELSLWFGGRIPPSGSFNIGFQNPYSRSTQPRSANLRSRSDSEKDVTAFHDTDRCRPPALLTASILGDVFLVVSPAVPSAAYGDVIDICLHRGFALYGLRRLRLSAKRSAMLSMSSTQVSIFCPNVPHSQTDAQPCRQPRLHCFLLLLRKENAAHHTSGLIQALMNELAERGLLGAIHAKFSYICEVDPSFCFHVAPYTDNLLQSLGGSLHAMPDLSTVPMDMLSLRPFASDPEDEQVVVLTMSGKHTLRRAGYFLQKILRPTLKTPASNTGSVHDGFELLGLKWLPSLSRLQAKEITPYEVGDRPWQRSIEHLISNPALLCALRRSNAFAVLQHTIKQLAPTLGMEHPQLIASATPEIAFRQAALIFSDRDLVSDPESRSSLMYIPPTGINCRAGGTEDRRGTTESIFTYMLSGPPVLYTVLLLKPRIWSSALGKILYKVHQQKFILVGMKPVSLTTAMCSQILPEDVKKSEALCLTHCDYLTSGPCLALCLQRRGAVLKLLDVLGPEDPELCRAQDQFLWRAQYGTSAVQNGMYGSTSYQAAIRDIKTFFPEGLLFEESTVLQAEQIPKLTSDILVCSRSHRQTVKNPACGPELPTTDLPFTSALCQTTCLLFPPHMLRTSPPPYIPALEQLMAKEFHITAARLTAFDQLQAQLVAEMYSPGNYLTAKIKLLTEGPCLLVAAQRDNAVTCFPSLVHSDDRHNMSAQTLTEQVLCPQTESQANKMLSCFFDSLTPDSIHQILH</sequence>
<protein>
    <recommendedName>
        <fullName evidence="5">Dynein axonemal assembly factor 8</fullName>
    </recommendedName>
    <alternativeName>
        <fullName evidence="4">Dynein axonemal-associated protein 1</fullName>
    </alternativeName>
</protein>
<proteinExistence type="evidence at protein level"/>